<reference key="1">
    <citation type="journal article" date="1992" name="Biochem. Biophys. Res. Commun.">
        <title>Multiple mRNA forms of human GTP cyclohydrolase I.</title>
        <authorList>
            <person name="Togari A."/>
            <person name="Ichinose H."/>
            <person name="Matsumoto S."/>
            <person name="Fujita K."/>
            <person name="Nagatsu T."/>
        </authorList>
    </citation>
    <scope>NUCLEOTIDE SEQUENCE [MRNA] (ISOFORMS GCH-1; GCH-2 AND GCH-3)</scope>
    <source>
        <tissue>Liver</tissue>
    </source>
</reference>
<reference key="2">
    <citation type="journal article" date="1994" name="Biochem. J.">
        <title>Human GTP cyclohydrolase I: only one out of three cDNA isoforms gives rise to the active enzyme.</title>
        <authorList>
            <person name="Guetlich M."/>
            <person name="Jaeger E."/>
            <person name="Rucknaegel K.P."/>
            <person name="Werner T."/>
            <person name="Roedl W."/>
            <person name="Ziegler I."/>
            <person name="Bacher A."/>
        </authorList>
    </citation>
    <scope>NUCLEOTIDE SEQUENCE [MRNA] (ISOFORMS GCH-1 AND GCH-2)</scope>
    <scope>FUNCTION</scope>
    <source>
        <tissue>Liver</tissue>
    </source>
</reference>
<reference key="3">
    <citation type="journal article" date="1995" name="J. Neural Transm.">
        <title>Isolation of a full-length cDNA clone for human GTP cyclohydrolase I type 1 from pheochromocytoma.</title>
        <authorList>
            <person name="Nomura T."/>
            <person name="Ohtsuki M."/>
            <person name="Matsui S."/>
            <person name="Sumi-Ichinose C."/>
            <person name="Nomura H."/>
            <person name="Hagino Y."/>
            <person name="Iwase K."/>
            <person name="Ichinose H."/>
            <person name="Fujita K."/>
            <person name="Nagatsu T."/>
        </authorList>
    </citation>
    <scope>NUCLEOTIDE SEQUENCE [MRNA]</scope>
    <source>
        <tissue>Pheochromocytoma</tissue>
    </source>
</reference>
<reference key="4">
    <citation type="journal article" date="2001" name="Biochem. J.">
        <title>GTP cyclohydrolase I mRNA: novel splice variants in the slime mould Physarum polycephalum and in human monocytes (THP-1) indicate conservation of mRNA processing.</title>
        <authorList>
            <person name="Golderer G."/>
            <person name="Werner E.R."/>
            <person name="Heufler C."/>
            <person name="Strohmaier W."/>
            <person name="Grobner P."/>
            <person name="Werner-Felmayer G."/>
        </authorList>
    </citation>
    <scope>NUCLEOTIDE SEQUENCE [MRNA] (ISOFORMS GCH-1 AND GCH-4)</scope>
    <source>
        <tissue>Myelomonocyte</tissue>
    </source>
</reference>
<reference key="5">
    <citation type="submission" date="2004-06" db="EMBL/GenBank/DDBJ databases">
        <title>Cloning of human full open reading frames in Gateway(TM) system entry vector (pDONR201).</title>
        <authorList>
            <person name="Ebert L."/>
            <person name="Schick M."/>
            <person name="Neubert P."/>
            <person name="Schatten R."/>
            <person name="Henze S."/>
            <person name="Korn B."/>
        </authorList>
    </citation>
    <scope>NUCLEOTIDE SEQUENCE [LARGE SCALE MRNA] (ISOFORM GCH-1)</scope>
</reference>
<reference key="6">
    <citation type="submission" date="2005-07" db="EMBL/GenBank/DDBJ databases">
        <authorList>
            <person name="Mural R.J."/>
            <person name="Istrail S."/>
            <person name="Sutton G.G."/>
            <person name="Florea L."/>
            <person name="Halpern A.L."/>
            <person name="Mobarry C.M."/>
            <person name="Lippert R."/>
            <person name="Walenz B."/>
            <person name="Shatkay H."/>
            <person name="Dew I."/>
            <person name="Miller J.R."/>
            <person name="Flanigan M.J."/>
            <person name="Edwards N.J."/>
            <person name="Bolanos R."/>
            <person name="Fasulo D."/>
            <person name="Halldorsson B.V."/>
            <person name="Hannenhalli S."/>
            <person name="Turner R."/>
            <person name="Yooseph S."/>
            <person name="Lu F."/>
            <person name="Nusskern D.R."/>
            <person name="Shue B.C."/>
            <person name="Zheng X.H."/>
            <person name="Zhong F."/>
            <person name="Delcher A.L."/>
            <person name="Huson D.H."/>
            <person name="Kravitz S.A."/>
            <person name="Mouchard L."/>
            <person name="Reinert K."/>
            <person name="Remington K.A."/>
            <person name="Clark A.G."/>
            <person name="Waterman M.S."/>
            <person name="Eichler E.E."/>
            <person name="Adams M.D."/>
            <person name="Hunkapiller M.W."/>
            <person name="Myers E.W."/>
            <person name="Venter J.C."/>
        </authorList>
    </citation>
    <scope>NUCLEOTIDE SEQUENCE [LARGE SCALE GENOMIC DNA]</scope>
</reference>
<reference key="7">
    <citation type="journal article" date="2004" name="Genome Res.">
        <title>The status, quality, and expansion of the NIH full-length cDNA project: the Mammalian Gene Collection (MGC).</title>
        <authorList>
            <consortium name="The MGC Project Team"/>
        </authorList>
    </citation>
    <scope>NUCLEOTIDE SEQUENCE [LARGE SCALE MRNA] (ISOFORM GCH-1)</scope>
    <source>
        <tissue>Brain</tissue>
    </source>
</reference>
<reference key="8">
    <citation type="journal article" date="1996" name="Gene">
        <title>Cloning, sequencing and functional studies of the gene encoding human GTP cyclohydrolase I.</title>
        <authorList>
            <person name="Witter K."/>
            <person name="Werner T."/>
            <person name="Blusch J.H."/>
            <person name="Schneider E.-M."/>
            <person name="Riess O."/>
            <person name="Ziegler I."/>
            <person name="Roedl W."/>
            <person name="Bacher A."/>
            <person name="Guetlich M."/>
        </authorList>
    </citation>
    <scope>NUCLEOTIDE SEQUENCE [GENOMIC DNA] OF 1-114</scope>
    <source>
        <tissue>Granulocyte</tissue>
    </source>
</reference>
<reference key="9">
    <citation type="journal article" date="1992" name="Biochim. Biophys. Acta">
        <title>Species and tissue specificity of mammalian GTP cyclohydrolase I messenger RNA.</title>
        <authorList>
            <person name="Guetlich M."/>
            <person name="Schott K."/>
            <person name="Werner T."/>
            <person name="Bacher A."/>
            <person name="Ziegler I."/>
        </authorList>
    </citation>
    <scope>NUCLEOTIDE SEQUENCE [MRNA] OF 60-242</scope>
</reference>
<reference key="10">
    <citation type="journal article" date="1995" name="J. Biol. Chem.">
        <title>Characterization of mouse and human GTP cyclohydrolase I genes. Mutations in patients with GTP cyclohydrolase I deficiency.</title>
        <authorList>
            <person name="Ichinose H."/>
            <person name="Ohye T."/>
            <person name="Matsuda Y."/>
            <person name="Hori T.A."/>
            <person name="Blau N."/>
            <person name="Burlina A."/>
            <person name="Rouse B."/>
            <person name="Matalon R."/>
            <person name="Fujita K."/>
            <person name="Nagatsu T."/>
        </authorList>
    </citation>
    <scope>NUCLEOTIDE SEQUENCE [GENOMIC DNA] OF 116-209</scope>
</reference>
<reference key="11">
    <citation type="journal article" date="1986" name="Biochim. Biophys. Acta">
        <title>The application of 8-aminoguanosine triphosphate, a new inhibitor of GTP cyclohydrolase I, to the purification of the enzyme from human liver.</title>
        <authorList>
            <person name="Blau N."/>
            <person name="Niederwieser A."/>
        </authorList>
    </citation>
    <scope>ENZYME ACTIVITY</scope>
    <scope>ACTIVITY REGULATION</scope>
</reference>
<reference key="12">
    <citation type="journal article" date="1989" name="Biochimie">
        <title>Human liver GTP cyclohydrolase I: purification and some properties.</title>
        <authorList>
            <person name="Shen R.-S."/>
            <person name="Alam A."/>
            <person name="Zhang Y.X."/>
        </authorList>
    </citation>
    <scope>BIOPHYSICOCHEMICAL PROPERTIES</scope>
</reference>
<reference key="13">
    <citation type="journal article" date="1989" name="Eur. J. Biochem.">
        <title>Purification of GTP cyclohydrolase I from human liver and production of specific monoclonal antibodies.</title>
        <authorList>
            <person name="Schoedon G."/>
            <person name="Redweik U."/>
            <person name="Curtius H.-C."/>
        </authorList>
    </citation>
    <scope>ENZYME ACTIVITY</scope>
    <scope>SUBCELLULAR LOCATION</scope>
</reference>
<reference key="14">
    <citation type="journal article" date="1993" name="J. Biol. Chem.">
        <title>Pteridine biosynthesis in human endothelial cells. Impact on nitric oxide-mediated formation of cyclic GMP.</title>
        <authorList>
            <person name="Werner-Felmayer G."/>
            <person name="Werner E.R."/>
            <person name="Fuchs D."/>
            <person name="Hausen A."/>
            <person name="Reibnegger G."/>
            <person name="Schmidt K."/>
            <person name="Weiss G."/>
            <person name="Wachter H."/>
        </authorList>
    </citation>
    <scope>INDUCTION</scope>
</reference>
<reference key="15">
    <citation type="journal article" date="1997" name="Hum. Mutat.">
        <title>Mutations in the GTP cyclohydrolase I and 6-pyruvoyl-tetrahydropterin synthase genes.</title>
        <authorList>
            <person name="Thoeny B."/>
            <person name="Blau N."/>
        </authorList>
    </citation>
    <scope>REVIEW ON VARIANTS</scope>
</reference>
<reference key="16">
    <citation type="journal article" date="1998" name="Arterioscler. Thromb. Vasc. Biol.">
        <title>Cytokines stimulate GTP cyclohydrolase I gene expression in cultured human umbilical vein endothelial cells.</title>
        <authorList>
            <person name="Katusic Z.S."/>
            <person name="Stelter A."/>
            <person name="Milstien S."/>
        </authorList>
    </citation>
    <scope>FUNCTION</scope>
    <scope>INDUCTION</scope>
</reference>
<reference key="17">
    <citation type="journal article" date="2002" name="Cardiovasc. Res.">
        <title>GTP cyclohydrolase I gene transfer augments intracellular tetrahydrobiopterin in human endothelial cells: effects on nitric oxide synthase activity, protein levels and dimerisation.</title>
        <authorList>
            <person name="Cai S."/>
            <person name="Alp N.J."/>
            <person name="McDonald D."/>
            <person name="Smith I."/>
            <person name="Kay J."/>
            <person name="Canevari L."/>
            <person name="Heales S."/>
            <person name="Channon K.M."/>
        </authorList>
    </citation>
    <scope>FUNCTION</scope>
    <scope>SUBCELLULAR LOCATION</scope>
</reference>
<reference key="18">
    <citation type="journal article" date="2002" name="Life Sci.">
        <title>cAMP inhibits cytokine-induced biosynthesis of tetrahydrobiopterin in human umbilical vein endothelial cells.</title>
        <authorList>
            <person name="Ohtsuki M."/>
            <person name="Shiraishi H."/>
            <person name="Kato T."/>
            <person name="Kuroda R."/>
            <person name="Tazawa M."/>
            <person name="Sumi-Ichinose C."/>
            <person name="Tada S."/>
            <person name="Udagawa Y."/>
            <person name="Itoh M."/>
            <person name="Hishida H."/>
            <person name="Ichinose H."/>
            <person name="Nagatsu T."/>
            <person name="Hagino Y."/>
            <person name="Nomura T."/>
        </authorList>
    </citation>
    <scope>INDUCTION</scope>
</reference>
<reference key="19">
    <citation type="journal article" date="2003" name="Basic Res. Cardiol.">
        <title>Role of human GTP cyclohydrolase I and its regulatory protein in tetrahydrobiopterin metabolism.</title>
        <authorList>
            <person name="Gesierich A."/>
            <person name="Niroomand F."/>
            <person name="Tiefenbacher C.P."/>
        </authorList>
    </citation>
    <scope>INDUCTION</scope>
</reference>
<reference key="20">
    <citation type="journal article" date="2003" name="J. Pharmacol. Sci.">
        <title>cGMP inhibits GTP cyclohydrolase I activity and biosynthesis of tetrahydrobiopterin in human umbilical vein endothelial cells.</title>
        <authorList>
            <person name="Shiraishi H."/>
            <person name="Kato T."/>
            <person name="Atsuta K."/>
            <person name="Sumi-Ichinose C."/>
            <person name="Ohtsuki M."/>
            <person name="Itoh M."/>
            <person name="Hishida H."/>
            <person name="Tada S."/>
            <person name="Udagawa Y."/>
            <person name="Nagatsu T."/>
            <person name="Hagino Y."/>
            <person name="Ichinose H."/>
            <person name="Nomura T."/>
        </authorList>
    </citation>
    <scope>INDUCTION</scope>
</reference>
<reference key="21">
    <citation type="journal article" date="2004" name="Eur. J. Biochem.">
        <title>GTP cyclohydrolase I utilizes metal-free GTP as its substrate.</title>
        <authorList>
            <person name="Suzuki T."/>
            <person name="Kurita H."/>
            <person name="Ichinose H."/>
        </authorList>
    </citation>
    <scope>ACTIVITY REGULATION</scope>
</reference>
<reference key="22">
    <citation type="journal article" date="2005" name="Brain Res. Brain Res. Protoc.">
        <title>The assays of activities and function of TH, AADC, and GCH1 and their potential use in ex vivo gene therapy of PD.</title>
        <authorList>
            <person name="Duan C.-L."/>
            <person name="Su Y."/>
            <person name="Zhao C.-L."/>
            <person name="Lu L.-L."/>
            <person name="Xu Q.-Y."/>
            <person name="Yang H."/>
        </authorList>
    </citation>
    <scope>FUNCTION</scope>
</reference>
<reference key="23">
    <citation type="journal article" date="2005" name="Circ. Res.">
        <title>Cytokine-stimulated GTP cyclohydrolase I expression in endothelial cells requires coordinated activation of nuclear factor-kappaB and Stat1/Stat3.</title>
        <authorList>
            <person name="Huang A."/>
            <person name="Zhang Y.-Y."/>
            <person name="Chen K."/>
            <person name="Hatakeyama K."/>
            <person name="Keaney J.F. Jr."/>
        </authorList>
    </citation>
    <scope>INDUCTION</scope>
</reference>
<reference key="24">
    <citation type="journal article" date="2005" name="Free Radic. Biol. Med.">
        <title>Changes in tetrahydrobiopterin levels in endothelial cells and adult cardiomyocytes induced by LPS and hydrogen peroxide -- a role for GFRP?</title>
        <authorList>
            <person name="Kalivendi S."/>
            <person name="Hatakeyama K."/>
            <person name="Whitsett J."/>
            <person name="Konorev E."/>
            <person name="Kalyanaraman B."/>
            <person name="Vasquez-Vivar J."/>
        </authorList>
    </citation>
    <scope>INDUCTION</scope>
</reference>
<reference key="25">
    <citation type="journal article" date="2006" name="Biochem. J.">
        <title>Interaction of human GTP cyclohydrolase I with its splice variants.</title>
        <authorList>
            <person name="Pandya M.J."/>
            <person name="Golderer G."/>
            <person name="Werner E.R."/>
            <person name="Werner-Felmayer G."/>
        </authorList>
    </citation>
    <scope>SUBUNIT</scope>
</reference>
<reference key="26">
    <citation type="journal article" date="2006" name="J. Invest. Dermatol.">
        <title>GTP cyclohydrolase feedback regulatory protein controls cofactor 6-tetrahydrobiopterin synthesis in the cytosol and in the nucleus of epidermal keratinocytes and melanocytes.</title>
        <authorList>
            <person name="Chavan B."/>
            <person name="Gillbro J.M."/>
            <person name="Rokos H."/>
            <person name="Schallreuter K.U."/>
        </authorList>
    </citation>
    <scope>ENZYME ACTIVITY</scope>
    <scope>ACTIVITY REGULATION</scope>
    <scope>SUBCELLULAR LOCATION</scope>
    <scope>TISSUE SPECIFICITY</scope>
</reference>
<reference key="27">
    <citation type="journal article" date="2006" name="J. Neurochem.">
        <title>A yeast 2-hybrid analysis of human GTP cyclohydrolase I protein interactions.</title>
        <authorList>
            <person name="Swick L."/>
            <person name="Kapatos G."/>
        </authorList>
    </citation>
    <scope>INTERACTION WITH AHSA1 AND GCHFR</scope>
</reference>
<reference key="28">
    <citation type="journal article" date="2006" name="Nat. Med.">
        <title>GTP cyclohydrolase and tetrahydrobiopterin regulate pain sensitivity and persistence.</title>
        <authorList>
            <person name="Tegeder I."/>
            <person name="Costigan M."/>
            <person name="Griffin R.S."/>
            <person name="Abele A."/>
            <person name="Belfer I."/>
            <person name="Schmidt H."/>
            <person name="Ehnert C."/>
            <person name="Nejim J."/>
            <person name="Marian C."/>
            <person name="Scholz J."/>
            <person name="Wu T."/>
            <person name="Allchorne A."/>
            <person name="Diatchenko L."/>
            <person name="Binshtok A.M."/>
            <person name="Goldman D."/>
            <person name="Adolph J."/>
            <person name="Sama S."/>
            <person name="Atlas S.J."/>
            <person name="Carlezon W.A."/>
            <person name="Parsegian A."/>
            <person name="Loetsch J."/>
            <person name="Fillingim R.B."/>
            <person name="Maixner W."/>
            <person name="Geisslinger G."/>
            <person name="Max M.B."/>
            <person name="Woolf C.J."/>
        </authorList>
    </citation>
    <scope>FUNCTION</scope>
</reference>
<reference key="29">
    <citation type="journal article" date="2007" name="Circ. Res.">
        <title>Regulation of tetrahydrobiopterin biosynthesis by shear stress.</title>
        <authorList>
            <person name="Widder J.D."/>
            <person name="Chen W."/>
            <person name="Li L."/>
            <person name="Dikalov S."/>
            <person name="Thony B."/>
            <person name="Hatakeyama K."/>
            <person name="Harrison D.G."/>
        </authorList>
    </citation>
    <scope>PHOSPHORYLATION AT SER-81</scope>
</reference>
<reference key="30">
    <citation type="journal article" date="2009" name="Sci. Signal.">
        <title>Quantitative phosphoproteomic analysis of T cell receptor signaling reveals system-wide modulation of protein-protein interactions.</title>
        <authorList>
            <person name="Mayya V."/>
            <person name="Lundgren D.H."/>
            <person name="Hwang S.-I."/>
            <person name="Rezaul K."/>
            <person name="Wu L."/>
            <person name="Eng J.K."/>
            <person name="Rodionov V."/>
            <person name="Han D.K."/>
        </authorList>
    </citation>
    <scope>PHOSPHORYLATION [LARGE SCALE ANALYSIS] AT SER-60</scope>
    <scope>IDENTIFICATION BY MASS SPECTROMETRY [LARGE SCALE ANALYSIS]</scope>
    <source>
        <tissue>Leukemic T-cell</tissue>
    </source>
</reference>
<reference key="31">
    <citation type="journal article" date="2000" name="Proc. Natl. Acad. Sci. U.S.A.">
        <title>Zinc plays a key role in human and bacterial GTP cyclohydrolase I.</title>
        <authorList>
            <person name="Auerbach G."/>
            <person name="Herrmann A."/>
            <person name="Bracher A."/>
            <person name="Bader G."/>
            <person name="Gutlich M."/>
            <person name="Fischer M."/>
            <person name="Neukamm M."/>
            <person name="Garrido-Franco M."/>
            <person name="Richardson J."/>
            <person name="Nar H."/>
            <person name="Huber R."/>
            <person name="Bacher A."/>
        </authorList>
    </citation>
    <scope>X-RAY CRYSTALLOGRAPHY (3.1 ANGSTROMS) OF 55-250</scope>
    <scope>SUBUNIT</scope>
    <scope>ZINC-BINDING SITES</scope>
</reference>
<reference key="32">
    <citation type="journal article" date="1994" name="Nat. Genet.">
        <title>Hereditary progressive dystonia with marked diurnal fluctuation caused by mutations in the GTP cyclohydrolase I gene.</title>
        <authorList>
            <person name="Ichinose H."/>
            <person name="Ohye T."/>
            <person name="Takahashi E."/>
            <person name="Seki N."/>
            <person name="Hori T."/>
            <person name="Segawa M."/>
            <person name="Nomura Y."/>
            <person name="Endo K."/>
            <person name="Tanaka H."/>
            <person name="Tsuji S."/>
            <person name="Fujita K."/>
            <person name="Nagatsu T."/>
        </authorList>
    </citation>
    <scope>VARIANTS DRD TRP-88; VAL-134 AND GLU-201</scope>
</reference>
<reference key="33">
    <citation type="journal article" date="1995" name="Neurosci. Lett.">
        <title>GTP cyclohydrolase I gene in hereditary progressive dystonia with marked diurnal fluctuation.</title>
        <authorList>
            <person name="Ichinose H."/>
            <person name="Ohye T."/>
            <person name="Segawa M."/>
            <person name="Nomura Y."/>
            <person name="Endo K."/>
            <person name="Tanaka H."/>
            <person name="Tsuji S."/>
            <person name="Fujita K."/>
            <person name="Nagatsu T."/>
        </authorList>
    </citation>
    <scope>VARIANT DRD PRO-79</scope>
    <scope>VARIANTS HPABH4B HIS-184 AND ILE-211</scope>
</reference>
<reference key="34">
    <citation type="journal article" date="1996" name="Ann. Neurol.">
        <title>Mutant GTP cyclohydrolase I mRNA levels contribute to dopa-responsive dystonia onset.</title>
        <authorList>
            <person name="Hirano M."/>
            <person name="Tamaru Y."/>
            <person name="Ito H."/>
            <person name="Matsumoto S."/>
            <person name="Imai T."/>
            <person name="Ueno S."/>
        </authorList>
    </citation>
    <scope>VARIANT DRD PRO-144</scope>
</reference>
<reference key="35">
    <citation type="journal article" date="1996" name="Hum. Mol. Genet.">
        <title>Dopa-responsive dystonia in British patients: new mutations of the GTP-cyclohydrolase I gene and evidence for genetic heterogeneity.</title>
        <authorList>
            <person name="Bandmann O."/>
            <person name="Nygaard T.G."/>
            <person name="Surtess R."/>
            <person name="Mardsen C.D."/>
            <person name="Wood N.W."/>
            <person name="Harding A.E."/>
        </authorList>
    </citation>
    <scope>VARIANTS DRD PRO-88; PRO-153; ARG-203; ARG-224 AND SER-234</scope>
</reference>
<reference key="36">
    <citation type="journal article" date="1997" name="J. Neurol. Neurosurg. Psych.">
        <title>A novel point mutation in the GTP cyclohydrolase I gene in a Spanish family with hereditary progressive and dopa responsive dystonia.</title>
        <authorList>
            <person name="Beyer K."/>
            <person name="Lao-Villadoniga J.I."/>
            <person name="Vecino-Bilbao B."/>
            <person name="Cacabelos R."/>
            <person name="de la Fuent-Fernandez R."/>
        </authorList>
    </citation>
    <scope>VARIANT DRD SER-178</scope>
</reference>
<reference key="37">
    <citation type="journal article" date="1997" name="J. Neurol. Neurosurg. Psych.">
        <title>GTP cyclohydrolase I mutations in patients with dystonia responsive to anticholinergic drugs.</title>
        <authorList>
            <person name="Jarman P.R."/>
            <person name="Bandmann O."/>
            <person name="Marsden C.D."/>
            <person name="Wood N.W."/>
        </authorList>
    </citation>
    <scope>VARIANTS DRD LEU-23 AND ASN-115</scope>
</reference>
<reference key="38">
    <citation type="journal article" date="1998" name="Ann. Neurol.">
        <title>Dystonia with motor delay in compound heterozygotes for GTP-cyclohydrolase I gene mutations.</title>
        <authorList>
            <person name="Furukawa Y."/>
            <person name="Kish S.J."/>
            <person name="Bebin E.M."/>
            <person name="Jacobson R.D."/>
            <person name="Fryburg J.S."/>
            <person name="Wilson W.G."/>
            <person name="Shimadzu M."/>
            <person name="Hyland K."/>
            <person name="Trugman J.M."/>
        </authorList>
    </citation>
    <scope>VARIANTS HPABH4B ASP-108; THR-221 AND ARG-224</scope>
</reference>
<reference key="39">
    <citation type="journal article" date="1998" name="Ann. Neurol.">
        <title>Dopa-responsive dystonia: a clinical and molecular genetic study.</title>
        <authorList>
            <person name="Bandmann O."/>
            <person name="Valente E.M."/>
            <person name="Holmans P."/>
            <person name="Surtees R.A."/>
            <person name="Walters J.H."/>
            <person name="Wevers R.A."/>
            <person name="Marsden C.D."/>
            <person name="Wood N.W."/>
        </authorList>
    </citation>
    <scope>VARIANTS DRD GLN-71; VAL-74; ALA-83; ILE-191; VAL-211 AND TRP-241</scope>
</reference>
<reference key="40">
    <citation type="journal article" date="1999" name="Hum. Genet.">
        <title>Dopa-responsive dystonia induced by a recessive GTP cyclohydrolase I mutation.</title>
        <authorList>
            <person name="Hwu W.-L."/>
            <person name="Wang P.-J."/>
            <person name="Hsiao K.-J."/>
            <person name="Wang T.-R."/>
            <person name="Chiou Y.-W."/>
            <person name="Lee Y.-M."/>
        </authorList>
    </citation>
    <scope>VARIANT DRD SER-249</scope>
</reference>
<reference key="41">
    <citation type="journal article" date="1999" name="J. Neurochem.">
        <title>Characterization of wild-type and mutants of recombinant human GTP cyclohydrolase I: relationship to etiology of dopa-responsive dystonia.</title>
        <authorList>
            <person name="Suzuki T."/>
            <person name="Ohye T."/>
            <person name="Inagaki H."/>
            <person name="Nagatsu T."/>
            <person name="Ichinose H."/>
        </authorList>
    </citation>
    <scope>VARIANTS DRD ARG-102; LYS-102; ARG-141; TRP-141; THR-176; SER-178 AND LYS-186</scope>
</reference>
<reference key="42">
    <citation type="journal article" date="1999" name="NeuroReport">
        <title>A new GTP-cyclohydrolase I mutation in an unusual dopa-responsive dystonia, familial form.</title>
        <authorList>
            <person name="Brique S."/>
            <person name="Destee A."/>
            <person name="Lambert J.-C."/>
            <person name="Mouroux V."/>
            <person name="Delacourte A."/>
            <person name="Amouyel P."/>
            <person name="Chartier-Harlin M.-C."/>
        </authorList>
    </citation>
    <scope>VARIANT DRD LYS-135</scope>
</reference>
<reference key="43">
    <citation type="journal article" date="1999" name="Neurosci. Lett.">
        <title>A novel missense mutant inactivates GTP cyclohydrolase I in dopa-responsive dystonia.</title>
        <authorList>
            <person name="Hirano M."/>
            <person name="Komure O."/>
            <person name="Ueno S."/>
        </authorList>
    </citation>
    <scope>VARIANT DRD VAL-90</scope>
</reference>
<reference key="44">
    <citation type="journal article" date="2000" name="Brain">
        <title>Levodopa-responsive dystonia. GTP cyclohydrolase I or parkin mutations?</title>
        <authorList>
            <person name="Tassin J."/>
            <person name="Duerr A."/>
            <person name="Bonnet A.-M."/>
            <person name="Gil R."/>
            <person name="Vidailhet M."/>
            <person name="Luecking C.B."/>
            <person name="Goas J.-Y."/>
            <person name="Durif F."/>
            <person name="Abada M."/>
            <person name="Echenne B."/>
            <person name="Motte J."/>
            <person name="Lagueny A."/>
            <person name="Lacomblez L."/>
            <person name="Jedynak P."/>
            <person name="Bartholome B."/>
            <person name="Agid Y."/>
            <person name="Brice A."/>
        </authorList>
    </citation>
    <scope>VARIANTS DRD ALA-83; 88-ARG-GLN-89 DEL; SER-178; ARG-180; LEU-199 AND GLU-201</scope>
</reference>
<reference key="45">
    <citation type="journal article" date="2000" name="Neurology">
        <title>Dopa-responsive dystonia: mutation analysis of GCH1 and analysis of therapeutic doses of L-dopa. German Dystonia Study Group.</title>
        <authorList>
            <person name="Steinberger D."/>
            <person name="Korinthenberg R."/>
            <person name="Topka H."/>
            <person name="Berghaeuser M."/>
            <person name="Wedde R."/>
            <person name="Mueller U."/>
        </authorList>
    </citation>
    <scope>VARIANTS DRD ARG-163 AND VAL-213</scope>
</reference>
<reference key="46">
    <citation type="journal article" date="2002" name="Neurology">
        <title>Autosomal dominant GTP-CH deficiency presenting as a dopa-responsive myoclonus-dystonia syndrome.</title>
        <authorList>
            <person name="Leuzzi V."/>
            <person name="Carducci C."/>
            <person name="Carducci C."/>
            <person name="Cardona F."/>
            <person name="Artiola C."/>
            <person name="Antonozzi I."/>
        </authorList>
    </citation>
    <scope>VARIANT DRD ARG-224</scope>
</reference>
<reference key="47">
    <citation type="journal article" date="2006" name="Arch. Neurol.">
        <title>Novel mutations in the guanosine triphosphate cyclohydrolase 1 gene associated with DYT5 dystonia.</title>
        <authorList>
            <person name="Ohta E."/>
            <person name="Funayama M."/>
            <person name="Ichinose H."/>
            <person name="Toyoshima I."/>
            <person name="Urano F."/>
            <person name="Matsuo M."/>
            <person name="Tomoko N."/>
            <person name="Yukihiko K."/>
            <person name="Yoshino S."/>
            <person name="Yokoyama H."/>
            <person name="Shimazu H."/>
            <person name="Maeda K."/>
            <person name="Hasegawa K."/>
            <person name="Obata F."/>
        </authorList>
    </citation>
    <scope>VARIANT DRD ILE-106</scope>
</reference>
<reference key="48">
    <citation type="journal article" date="2013" name="PLoS ONE">
        <title>GTP cyclohydrolase I and tyrosine hydroxylase gene mutations in familial and sporadic dopa-responsive dystonia patients.</title>
        <authorList>
            <person name="Cai C."/>
            <person name="Shi W."/>
            <person name="Zeng Z."/>
            <person name="Zhang M."/>
            <person name="Ling C."/>
            <person name="Chen L."/>
            <person name="Cai C."/>
            <person name="Zhang B."/>
            <person name="Li W.D."/>
        </authorList>
    </citation>
    <scope>VARIANTS CYS-75; VAL-98 AND THR-135</scope>
</reference>
<comment type="function">
    <text evidence="10 17 21 30 35">Positively regulates nitric oxide synthesis in umbilical vein endothelial cells (HUVECs). May be involved in dopamine synthesis. May modify pain sensitivity and persistence. Isoform GCH-1 is the functional enzyme, the potential function of the enzymatically inactive isoforms remains unknown.</text>
</comment>
<comment type="catalytic activity">
    <reaction evidence="19 24 26">
        <text>GTP + H2O = 7,8-dihydroneopterin 3'-triphosphate + formate + H(+)</text>
        <dbReference type="Rhea" id="RHEA:17473"/>
        <dbReference type="ChEBI" id="CHEBI:15377"/>
        <dbReference type="ChEBI" id="CHEBI:15378"/>
        <dbReference type="ChEBI" id="CHEBI:15740"/>
        <dbReference type="ChEBI" id="CHEBI:37565"/>
        <dbReference type="ChEBI" id="CHEBI:58462"/>
        <dbReference type="EC" id="3.5.4.16"/>
    </reaction>
</comment>
<comment type="activity regulation">
    <text evidence="14 19 26">GTP shows a positive allosteric effect, and tetrahydrobiopterin inhibits the enzyme activity. Zinc is required for catalytic activity. Inhibited by Mg(2+).</text>
</comment>
<comment type="biophysicochemical properties">
    <kinetics>
        <KM evidence="25">116 uM for GTP</KM>
    </kinetics>
    <phDependence>
        <text evidence="25">Optimum pH is 7.7 in phosphate buffer.</text>
    </phDependence>
    <temperatureDependence>
        <text evidence="25">Relatively stable at high temperatures. Retains 50% of its activity after incubation at 70 degrees Celsius for 15 minutes.</text>
    </temperatureDependence>
</comment>
<comment type="pathway">
    <text evidence="42 43 44">Cofactor biosynthesis; 7,8-dihydroneopterin triphosphate biosynthesis; 7,8-dihydroneopterin triphosphate from GTP: step 1/1.</text>
</comment>
<comment type="subunit">
    <text evidence="7 18 20">Toroid-shaped homodecamer, composed of a dimer of pentamers. The inactive isoforms also form decamers and may possibly be incorporated into GCH1 heterodecamers, decreasing enzyme stability and activity. Interacts with AHSA1 and GCHFR/GFRP.</text>
</comment>
<comment type="interaction">
    <interactant intactId="EBI-958183">
        <id>P30793</id>
    </interactant>
    <interactant intactId="EBI-448610">
        <id>O95433</id>
        <label>AHSA1</label>
    </interactant>
    <organismsDiffer>false</organismsDiffer>
    <experiments>3</experiments>
</comment>
<comment type="interaction">
    <interactant intactId="EBI-958183">
        <id>P30793</id>
    </interactant>
    <interactant intactId="EBI-12076664">
        <id>O14787-2</id>
        <label>TNPO2</label>
    </interactant>
    <organismsDiffer>false</organismsDiffer>
    <experiments>3</experiments>
</comment>
<comment type="interaction">
    <interactant intactId="EBI-958183">
        <id>P30793</id>
    </interactant>
    <interactant intactId="EBI-1042571">
        <id>Q9Y5L0</id>
        <label>TNPO3</label>
    </interactant>
    <organismsDiffer>false</organismsDiffer>
    <experiments>3</experiments>
</comment>
<comment type="interaction">
    <interactant intactId="EBI-958183">
        <id>P30793</id>
    </interactant>
    <interactant intactId="EBI-347088">
        <id>P63104</id>
        <label>YWHAZ</label>
    </interactant>
    <organismsDiffer>false</organismsDiffer>
    <experiments>4</experiments>
</comment>
<comment type="subcellular location">
    <subcellularLocation>
        <location evidence="10 19 24">Cytoplasm</location>
    </subcellularLocation>
    <subcellularLocation>
        <location evidence="19">Nucleus</location>
    </subcellularLocation>
</comment>
<comment type="alternative products">
    <event type="alternative splicing"/>
    <isoform>
        <id>P30793-1</id>
        <name>GCH-1</name>
        <sequence type="displayed"/>
    </isoform>
    <isoform>
        <id>P30793-2</id>
        <name>GCH-2</name>
        <sequence type="described" ref="VSP_001612 VSP_001613"/>
    </isoform>
    <isoform>
        <id>P30793-3</id>
        <name>GCH-3</name>
        <sequence type="described" ref="VSP_001610"/>
    </isoform>
    <isoform>
        <id>P30793-4</id>
        <name>GCH-4</name>
        <sequence type="described" ref="VSP_001611 VSP_001614"/>
    </isoform>
</comment>
<comment type="tissue specificity">
    <text evidence="19">In epidermis, expressed predominantly in basal undifferentiated keratinocytes and in some but not all melanocytes (at protein level).</text>
</comment>
<comment type="induction">
    <text evidence="9 12 13 15 16 28 35">Up-regulated by IFNG/IFN-gamma, TNF, IL1B/interleukin-1 beta, bacterial lipopolysaccharides (LPS) and phenylalanine, and down-regulated by dibutyryl-cAMP, iloprost and 8-bromo-cGMP in HUVEC cells. Up-regulation of GCH1 expression, in turn, stimulates production of tetrahydrobiopterin, with subsequent elevation of endothelial nitric oxide synthase activity. Cytokine-induced GCH1 up-regulation in HUVECs in response to TNF and IFNG/IFN-gamma involves cooperative activation of both the NF-kappa-B and JAK2/STAT pathways. Also up-regulated by hydrogen peroxide in human aorta endothelial cells (HAECs).</text>
</comment>
<comment type="PTM">
    <text evidence="23">Phosphorylated by casein kinase II at Ser-81 in HAECs during oscillatory shear stress; phosphorylation at Ser-81 results in increased enzyme activity.</text>
</comment>
<comment type="disease" evidence="27 36">
    <disease id="DI-00538">
        <name>Hyperphenylalaninemia, BH4-deficient, B</name>
        <acronym>HPABH4B</acronym>
        <description>A disease characterized by malignant hyperphenylalaninemia due to tetrahydrobiopterin deficiency, and defective neurotransmission due to depletion of the neurotransmitters dopamine and serotonin. The principal symptoms include: psychomotor retardation, tonicity disorders, convulsions, drowsiness, irritability, abnormal movements, hyperthermia, hypersalivation, and difficulty swallowing. Some patients may present a phenotype of intermediate severity between severe hyperphenylalaninemia and mild dystonia. In this intermediate phenotype, there is marked motor delay, but no intellectual disability and only minimal, if any, hyperphenylalaninemia.</description>
        <dbReference type="MIM" id="233910"/>
    </disease>
    <text>The disease is caused by variants affecting the gene represented in this entry.</text>
</comment>
<comment type="disease" evidence="2 3 4 5 6 8 11 22 27 29 31 32 33 34 37">
    <disease id="DI-00415">
        <name>Dystonia, dopa-responsive</name>
        <acronym>DRD</acronym>
        <description>A form of dystonia that responds to L-DOPA treatment without side effects. Dystonia is defined by the presence of sustained involuntary muscle contractions, often leading to abnormal postures. DRD typically presents in childhood with walking problems due to dystonia of the lower limbs and worsening of the dystonia towards the evening. It is characterized by postural and motor disturbances showing marked diurnal fluctuation. Torsion of the trunk is unusual. Symptoms are alleviated after sleep and aggravated by fatigue and exercise.</description>
        <dbReference type="MIM" id="128230"/>
    </disease>
    <text>The disease is caused by variants affecting the gene represented in this entry.</text>
</comment>
<comment type="similarity">
    <text evidence="41">Belongs to the GTP cyclohydrolase I family.</text>
</comment>
<sequence length="250" mass="27903">MEKGPVRAPAEKPRGARCSNGFPERDPPRPGPSRPAEKPPRPEAKSAQPADGWKGERPRSEEDNELNLPNLAAAYSSILSSLGENPQRQGLLKTPWRAASAMQFFTKGYQETISDVLNDAIFDEDHDEMVIVKDIDMFSMCEHHLVPFVGKVHIGYLPNKQVLGLSKLARIVEIYSRRLQVQERLTKQIAVAITEALRPAGVGVVVEATHMCMVMRGVQKMNSKTVTSTMLGVFREDPKTREEFLTLIRS</sequence>
<protein>
    <recommendedName>
        <fullName>GTP cyclohydrolase 1</fullName>
        <ecNumber evidence="19 24 26">3.5.4.16</ecNumber>
    </recommendedName>
    <alternativeName>
        <fullName>GTP cyclohydrolase I</fullName>
        <shortName>GTP-CH-I</shortName>
    </alternativeName>
</protein>
<evidence type="ECO:0000256" key="1">
    <source>
        <dbReference type="SAM" id="MobiDB-lite"/>
    </source>
</evidence>
<evidence type="ECO:0000269" key="2">
    <source>
    </source>
</evidence>
<evidence type="ECO:0000269" key="3">
    <source>
    </source>
</evidence>
<evidence type="ECO:0000269" key="4">
    <source>
    </source>
</evidence>
<evidence type="ECO:0000269" key="5">
    <source>
    </source>
</evidence>
<evidence type="ECO:0000269" key="6">
    <source>
    </source>
</evidence>
<evidence type="ECO:0000269" key="7">
    <source>
    </source>
</evidence>
<evidence type="ECO:0000269" key="8">
    <source>
    </source>
</evidence>
<evidence type="ECO:0000269" key="9">
    <source>
    </source>
</evidence>
<evidence type="ECO:0000269" key="10">
    <source>
    </source>
</evidence>
<evidence type="ECO:0000269" key="11">
    <source>
    </source>
</evidence>
<evidence type="ECO:0000269" key="12">
    <source>
    </source>
</evidence>
<evidence type="ECO:0000269" key="13">
    <source>
    </source>
</evidence>
<evidence type="ECO:0000269" key="14">
    <source>
    </source>
</evidence>
<evidence type="ECO:0000269" key="15">
    <source>
    </source>
</evidence>
<evidence type="ECO:0000269" key="16">
    <source>
    </source>
</evidence>
<evidence type="ECO:0000269" key="17">
    <source>
    </source>
</evidence>
<evidence type="ECO:0000269" key="18">
    <source>
    </source>
</evidence>
<evidence type="ECO:0000269" key="19">
    <source>
    </source>
</evidence>
<evidence type="ECO:0000269" key="20">
    <source>
    </source>
</evidence>
<evidence type="ECO:0000269" key="21">
    <source>
    </source>
</evidence>
<evidence type="ECO:0000269" key="22">
    <source>
    </source>
</evidence>
<evidence type="ECO:0000269" key="23">
    <source>
    </source>
</evidence>
<evidence type="ECO:0000269" key="24">
    <source>
    </source>
</evidence>
<evidence type="ECO:0000269" key="25">
    <source>
    </source>
</evidence>
<evidence type="ECO:0000269" key="26">
    <source>
    </source>
</evidence>
<evidence type="ECO:0000269" key="27">
    <source>
    </source>
</evidence>
<evidence type="ECO:0000269" key="28">
    <source>
    </source>
</evidence>
<evidence type="ECO:0000269" key="29">
    <source>
    </source>
</evidence>
<evidence type="ECO:0000269" key="30">
    <source>
    </source>
</evidence>
<evidence type="ECO:0000269" key="31">
    <source>
    </source>
</evidence>
<evidence type="ECO:0000269" key="32">
    <source>
    </source>
</evidence>
<evidence type="ECO:0000269" key="33">
    <source>
    </source>
</evidence>
<evidence type="ECO:0000269" key="34">
    <source>
    </source>
</evidence>
<evidence type="ECO:0000269" key="35">
    <source>
    </source>
</evidence>
<evidence type="ECO:0000269" key="36">
    <source>
    </source>
</evidence>
<evidence type="ECO:0000269" key="37">
    <source>
    </source>
</evidence>
<evidence type="ECO:0000303" key="38">
    <source>
    </source>
</evidence>
<evidence type="ECO:0000303" key="39">
    <source>
    </source>
</evidence>
<evidence type="ECO:0000303" key="40">
    <source>
    </source>
</evidence>
<evidence type="ECO:0000305" key="41"/>
<evidence type="ECO:0000305" key="42">
    <source>
    </source>
</evidence>
<evidence type="ECO:0000305" key="43">
    <source>
    </source>
</evidence>
<evidence type="ECO:0000305" key="44">
    <source>
    </source>
</evidence>
<evidence type="ECO:0007744" key="45">
    <source>
    </source>
</evidence>
<evidence type="ECO:0007829" key="46">
    <source>
        <dbReference type="PDB" id="1FB1"/>
    </source>
</evidence>
<evidence type="ECO:0007829" key="47">
    <source>
        <dbReference type="PDB" id="6Z85"/>
    </source>
</evidence>
<evidence type="ECO:0007829" key="48">
    <source>
        <dbReference type="PDB" id="7ALB"/>
    </source>
</evidence>
<evidence type="ECO:0007829" key="49">
    <source>
        <dbReference type="PDB" id="7ALC"/>
    </source>
</evidence>
<feature type="chain" id="PRO_0000119478" description="GTP cyclohydrolase 1">
    <location>
        <begin position="1"/>
        <end position="250"/>
    </location>
</feature>
<feature type="region of interest" description="Disordered" evidence="1">
    <location>
        <begin position="1"/>
        <end position="64"/>
    </location>
</feature>
<feature type="compositionally biased region" description="Basic and acidic residues" evidence="1">
    <location>
        <begin position="1"/>
        <end position="14"/>
    </location>
</feature>
<feature type="compositionally biased region" description="Basic and acidic residues" evidence="1">
    <location>
        <begin position="35"/>
        <end position="44"/>
    </location>
</feature>
<feature type="binding site" evidence="7">
    <location>
        <position position="141"/>
    </location>
    <ligand>
        <name>Zn(2+)</name>
        <dbReference type="ChEBI" id="CHEBI:29105"/>
    </ligand>
</feature>
<feature type="binding site" evidence="7">
    <location>
        <position position="144"/>
    </location>
    <ligand>
        <name>Zn(2+)</name>
        <dbReference type="ChEBI" id="CHEBI:29105"/>
    </ligand>
</feature>
<feature type="binding site" evidence="7">
    <location>
        <position position="212"/>
    </location>
    <ligand>
        <name>Zn(2+)</name>
        <dbReference type="ChEBI" id="CHEBI:29105"/>
    </ligand>
</feature>
<feature type="modified residue" description="Phosphoserine" evidence="45">
    <location>
        <position position="60"/>
    </location>
</feature>
<feature type="modified residue" description="Phosphoserine" evidence="23">
    <location>
        <position position="81"/>
    </location>
</feature>
<feature type="splice variant" id="VSP_001610" description="In isoform GCH-3." evidence="39">
    <location>
        <begin position="210"/>
        <end position="250"/>
    </location>
</feature>
<feature type="splice variant" id="VSP_001611" description="In isoform GCH-4." evidence="38">
    <original>HMCMVMRGVQKMNSKTVTSTMLGV</original>
    <variation>KSNKYNKGLSPLLSSCHLFVAILK</variation>
    <location>
        <begin position="210"/>
        <end position="233"/>
    </location>
</feature>
<feature type="splice variant" id="VSP_001612" description="In isoform GCH-2." evidence="39 40">
    <original>HMCM</original>
    <variation>SAEP</variation>
    <location>
        <begin position="210"/>
        <end position="213"/>
    </location>
</feature>
<feature type="splice variant" id="VSP_001613" description="In isoform GCH-2." evidence="39 40">
    <location>
        <begin position="214"/>
        <end position="250"/>
    </location>
</feature>
<feature type="splice variant" id="VSP_001614" description="In isoform GCH-4." evidence="38">
    <location>
        <begin position="234"/>
        <end position="250"/>
    </location>
</feature>
<feature type="sequence variant" id="VAR_002632" description="In HGCH-3.">
    <original>G</original>
    <variation>D</variation>
    <location>
        <position position="15"/>
    </location>
</feature>
<feature type="sequence variant" id="VAR_002633" description="In DRD; dbSNP:rs41298432." evidence="34">
    <original>P</original>
    <variation>L</variation>
    <location>
        <position position="23"/>
    </location>
</feature>
<feature type="sequence variant" id="VAR_016888" description="In DRD." evidence="37">
    <original>L</original>
    <variation>Q</variation>
    <location>
        <position position="71"/>
    </location>
</feature>
<feature type="sequence variant" id="VAR_016889" description="In DRD." evidence="37">
    <original>A</original>
    <variation>V</variation>
    <location>
        <position position="74"/>
    </location>
</feature>
<feature type="sequence variant" id="VAR_072733" description="Found in patients with DRD; uncertain significance.">
    <original>Y</original>
    <variation>C</variation>
    <location>
        <position position="75"/>
    </location>
</feature>
<feature type="sequence variant" id="VAR_002634" description="In DRD." evidence="27">
    <original>L</original>
    <variation>P</variation>
    <location>
        <position position="79"/>
    </location>
</feature>
<feature type="sequence variant" id="VAR_016890" description="In DRD." evidence="5 37">
    <original>G</original>
    <variation>A</variation>
    <location>
        <position position="83"/>
    </location>
</feature>
<feature type="sequence variant" id="VAR_016891" description="In DRD." evidence="5">
    <location>
        <begin position="88"/>
        <end position="89"/>
    </location>
</feature>
<feature type="sequence variant" id="VAR_002635" description="In DRD." evidence="31">
    <original>R</original>
    <variation>P</variation>
    <location>
        <position position="88"/>
    </location>
</feature>
<feature type="sequence variant" id="VAR_002636" description="In DRD; dbSNP:rs104894433." evidence="29">
    <original>R</original>
    <variation>W</variation>
    <location>
        <position position="88"/>
    </location>
</feature>
<feature type="sequence variant" id="VAR_016892" description="In DRD." evidence="2">
    <original>G</original>
    <variation>V</variation>
    <location>
        <position position="90"/>
    </location>
</feature>
<feature type="sequence variant" id="VAR_072734">
    <original>A</original>
    <variation>V</variation>
    <location>
        <position position="98"/>
    </location>
</feature>
<feature type="sequence variant" id="VAR_002637" description="In DRD." evidence="4">
    <original>M</original>
    <variation>K</variation>
    <location>
        <position position="102"/>
    </location>
</feature>
<feature type="sequence variant" id="VAR_016893" description="In DRD." evidence="4">
    <original>M</original>
    <variation>R</variation>
    <location>
        <position position="102"/>
    </location>
</feature>
<feature type="sequence variant" id="VAR_054112" description="In DRD." evidence="22">
    <original>T</original>
    <variation>I</variation>
    <location>
        <position position="106"/>
    </location>
</feature>
<feature type="sequence variant" id="VAR_016894" description="In HPABH4B; intermediate phenotype presenting with dystonia and motor delay; dbSNP:rs104894435." evidence="36">
    <original>G</original>
    <variation>D</variation>
    <location>
        <position position="108"/>
    </location>
</feature>
<feature type="sequence variant" id="VAR_016895" description="In DRD; dbSNP:rs1393095176." evidence="34">
    <original>D</original>
    <variation>N</variation>
    <location>
        <position position="115"/>
    </location>
</feature>
<feature type="sequence variant" id="VAR_002638" description="In DRD; dbSNP:rs104894437." evidence="29">
    <original>D</original>
    <variation>V</variation>
    <location>
        <position position="134"/>
    </location>
</feature>
<feature type="sequence variant" id="VAR_016896" description="In DRD; dbSNP:rs104894441." evidence="3">
    <original>I</original>
    <variation>K</variation>
    <location>
        <position position="135"/>
    </location>
</feature>
<feature type="sequence variant" id="VAR_072735">
    <original>I</original>
    <variation>T</variation>
    <location>
        <position position="135"/>
    </location>
</feature>
<feature type="sequence variant" id="VAR_016897" description="In DRD." evidence="4">
    <original>C</original>
    <variation>R</variation>
    <location>
        <position position="141"/>
    </location>
</feature>
<feature type="sequence variant" id="VAR_002639" description="In DRD." evidence="4">
    <original>C</original>
    <variation>W</variation>
    <location>
        <position position="141"/>
    </location>
</feature>
<feature type="sequence variant" id="VAR_002640" description="In DRD; dbSNP:rs104894440." evidence="32">
    <original>H</original>
    <variation>P</variation>
    <location>
        <position position="144"/>
    </location>
</feature>
<feature type="sequence variant" id="VAR_002641" description="In DRD." evidence="31">
    <original>H</original>
    <variation>P</variation>
    <location>
        <position position="153"/>
    </location>
</feature>
<feature type="sequence variant" id="VAR_016898" description="In DRD." evidence="8">
    <original>L</original>
    <variation>R</variation>
    <location>
        <position position="163"/>
    </location>
</feature>
<feature type="sequence variant" id="VAR_016899" description="In DRD." evidence="4">
    <original>S</original>
    <variation>T</variation>
    <location>
        <position position="176"/>
    </location>
</feature>
<feature type="sequence variant" id="VAR_002642" description="In DRD." evidence="4 5 33">
    <original>R</original>
    <variation>S</variation>
    <location>
        <position position="178"/>
    </location>
</feature>
<feature type="sequence variant" id="VAR_016900" description="In DRD." evidence="5">
    <original>Q</original>
    <variation>R</variation>
    <location>
        <position position="180"/>
    </location>
</feature>
<feature type="sequence variant" id="VAR_002643" description="In HPABH4B; severe hyperphenylalaninemia; dbSNP:rs104894445." evidence="27">
    <original>R</original>
    <variation>H</variation>
    <location>
        <position position="184"/>
    </location>
</feature>
<feature type="sequence variant" id="VAR_002644" description="In DRD." evidence="4">
    <original>T</original>
    <variation>K</variation>
    <location>
        <position position="186"/>
    </location>
</feature>
<feature type="sequence variant" id="VAR_016901" description="In DRD; dbSNP:rs762208304." evidence="37">
    <original>V</original>
    <variation>I</variation>
    <location>
        <position position="191"/>
    </location>
</feature>
<feature type="sequence variant" id="VAR_016902" description="In DRD." evidence="5">
    <original>P</original>
    <variation>L</variation>
    <location>
        <position position="199"/>
    </location>
</feature>
<feature type="sequence variant" id="VAR_002645" description="In DRD; dbSNP:rs104894438." evidence="5 29">
    <original>G</original>
    <variation>E</variation>
    <location>
        <position position="201"/>
    </location>
</feature>
<feature type="sequence variant" id="VAR_002646" description="In DRD; dbSNP:rs988395114." evidence="31">
    <original>G</original>
    <variation>R</variation>
    <location>
        <position position="203"/>
    </location>
</feature>
<feature type="sequence variant" id="VAR_002647" description="In HPABH4B; severe hyperphenylalaninemia; dbSNP:rs104894443." evidence="27">
    <original>M</original>
    <variation>I</variation>
    <location>
        <position position="211"/>
    </location>
</feature>
<feature type="sequence variant" id="VAR_016903" description="In DRD." evidence="37">
    <original>M</original>
    <variation>V</variation>
    <location>
        <position position="211"/>
    </location>
</feature>
<feature type="sequence variant" id="VAR_016904" description="In DRD; dbSNP:rs1348562494." evidence="8">
    <original>M</original>
    <variation>V</variation>
    <location>
        <position position="213"/>
    </location>
</feature>
<feature type="sequence variant" id="VAR_016905" description="In HPABH4B; intermediate phenotype presenting with dystonia and motor delay; dbSNP:rs104894434." evidence="36">
    <original>M</original>
    <variation>T</variation>
    <location>
        <position position="221"/>
    </location>
</feature>
<feature type="sequence variant" id="VAR_002648" description="In HPABH4B and DRD; phenotype presenting with dystonia and myoclonus; dbSNP:rs41298442." evidence="11 31 36">
    <original>K</original>
    <variation>R</variation>
    <location>
        <position position="224"/>
    </location>
</feature>
<feature type="sequence variant" id="VAR_002649" description="In DRD." evidence="31">
    <original>F</original>
    <variation>S</variation>
    <location>
        <position position="234"/>
    </location>
</feature>
<feature type="sequence variant" id="VAR_016906" description="In DRD; dbSNP:rs1375209791." evidence="37">
    <original>R</original>
    <variation>W</variation>
    <location>
        <position position="241"/>
    </location>
</feature>
<feature type="sequence variant" id="VAR_016907" description="In DRD; dbSNP:rs104894442." evidence="6">
    <original>R</original>
    <variation>S</variation>
    <location>
        <position position="249"/>
    </location>
</feature>
<feature type="sequence conflict" description="In Ref. 4; AAD38866." evidence="41" ref="4">
    <original>E</original>
    <variation>G</variation>
    <location>
        <position position="11"/>
    </location>
</feature>
<feature type="sequence conflict" description="In Ref. 9; CAA78908." evidence="41" ref="9">
    <original>V</original>
    <variation>I</variation>
    <location>
        <position position="206"/>
    </location>
</feature>
<feature type="helix" evidence="49">
    <location>
        <begin position="61"/>
        <end position="81"/>
    </location>
</feature>
<feature type="strand" evidence="47">
    <location>
        <begin position="86"/>
        <end position="88"/>
    </location>
</feature>
<feature type="helix" evidence="49">
    <location>
        <begin position="89"/>
        <end position="91"/>
    </location>
</feature>
<feature type="helix" evidence="49">
    <location>
        <begin position="94"/>
        <end position="105"/>
    </location>
</feature>
<feature type="helix" evidence="49">
    <location>
        <begin position="107"/>
        <end position="110"/>
    </location>
</feature>
<feature type="helix" evidence="49">
    <location>
        <begin position="113"/>
        <end position="116"/>
    </location>
</feature>
<feature type="turn" evidence="49">
    <location>
        <begin position="117"/>
        <end position="119"/>
    </location>
</feature>
<feature type="strand" evidence="49">
    <location>
        <begin position="121"/>
        <end position="123"/>
    </location>
</feature>
<feature type="strand" evidence="49">
    <location>
        <begin position="129"/>
        <end position="141"/>
    </location>
</feature>
<feature type="turn" evidence="49">
    <location>
        <begin position="142"/>
        <end position="144"/>
    </location>
</feature>
<feature type="strand" evidence="49">
    <location>
        <begin position="147"/>
        <end position="157"/>
    </location>
</feature>
<feature type="strand" evidence="49">
    <location>
        <begin position="159"/>
        <end position="163"/>
    </location>
</feature>
<feature type="helix" evidence="49">
    <location>
        <begin position="165"/>
        <end position="176"/>
    </location>
</feature>
<feature type="strand" evidence="49">
    <location>
        <begin position="177"/>
        <end position="180"/>
    </location>
</feature>
<feature type="helix" evidence="49">
    <location>
        <begin position="182"/>
        <end position="197"/>
    </location>
</feature>
<feature type="strand" evidence="49">
    <location>
        <begin position="200"/>
        <end position="210"/>
    </location>
</feature>
<feature type="helix" evidence="48">
    <location>
        <begin position="211"/>
        <end position="213"/>
    </location>
</feature>
<feature type="turn" evidence="46">
    <location>
        <begin position="215"/>
        <end position="217"/>
    </location>
</feature>
<feature type="strand" evidence="49">
    <location>
        <begin position="224"/>
        <end position="232"/>
    </location>
</feature>
<feature type="helix" evidence="49">
    <location>
        <begin position="233"/>
        <end position="236"/>
    </location>
</feature>
<feature type="helix" evidence="49">
    <location>
        <begin position="238"/>
        <end position="247"/>
    </location>
</feature>
<organism>
    <name type="scientific">Homo sapiens</name>
    <name type="common">Human</name>
    <dbReference type="NCBI Taxonomy" id="9606"/>
    <lineage>
        <taxon>Eukaryota</taxon>
        <taxon>Metazoa</taxon>
        <taxon>Chordata</taxon>
        <taxon>Craniata</taxon>
        <taxon>Vertebrata</taxon>
        <taxon>Euteleostomi</taxon>
        <taxon>Mammalia</taxon>
        <taxon>Eutheria</taxon>
        <taxon>Euarchontoglires</taxon>
        <taxon>Primates</taxon>
        <taxon>Haplorrhini</taxon>
        <taxon>Catarrhini</taxon>
        <taxon>Hominidae</taxon>
        <taxon>Homo</taxon>
    </lineage>
</organism>
<accession>P30793</accession>
<accession>Q6FHY7</accession>
<accession>Q9Y4I8</accession>
<keyword id="KW-0002">3D-structure</keyword>
<keyword id="KW-0021">Allosteric enzyme</keyword>
<keyword id="KW-0025">Alternative splicing</keyword>
<keyword id="KW-0963">Cytoplasm</keyword>
<keyword id="KW-0225">Disease variant</keyword>
<keyword id="KW-1023">Dystonia</keyword>
<keyword id="KW-0342">GTP-binding</keyword>
<keyword id="KW-0378">Hydrolase</keyword>
<keyword id="KW-0479">Metal-binding</keyword>
<keyword id="KW-0547">Nucleotide-binding</keyword>
<keyword id="KW-0539">Nucleus</keyword>
<keyword id="KW-0908">Parkinsonism</keyword>
<keyword id="KW-0586">Phenylketonuria</keyword>
<keyword id="KW-0597">Phosphoprotein</keyword>
<keyword id="KW-1267">Proteomics identification</keyword>
<keyword id="KW-1185">Reference proteome</keyword>
<keyword id="KW-0783">Tetrahydrobiopterin biosynthesis</keyword>
<keyword id="KW-0862">Zinc</keyword>
<gene>
    <name type="primary">GCH1</name>
    <name type="synonym">DYT5</name>
    <name type="synonym">GCH</name>
</gene>
<proteinExistence type="evidence at protein level"/>
<dbReference type="EC" id="3.5.4.16" evidence="19 24 26"/>
<dbReference type="EMBL" id="S44049">
    <property type="protein sequence ID" value="AAB23164.1"/>
    <property type="molecule type" value="mRNA"/>
</dbReference>
<dbReference type="EMBL" id="S44053">
    <property type="protein sequence ID" value="AAB23165.1"/>
    <property type="molecule type" value="mRNA"/>
</dbReference>
<dbReference type="EMBL" id="S43856">
    <property type="protein sequence ID" value="AAB23166.1"/>
    <property type="molecule type" value="mRNA"/>
</dbReference>
<dbReference type="EMBL" id="Z29433">
    <property type="protein sequence ID" value="CAB77391.1"/>
    <property type="molecule type" value="mRNA"/>
</dbReference>
<dbReference type="EMBL" id="Z29434">
    <property type="protein sequence ID" value="CAB77392.1"/>
    <property type="molecule type" value="mRNA"/>
</dbReference>
<dbReference type="EMBL" id="U19523">
    <property type="protein sequence ID" value="AAB16861.1"/>
    <property type="molecule type" value="mRNA"/>
</dbReference>
<dbReference type="EMBL" id="U66095">
    <property type="protein sequence ID" value="AAD38866.1"/>
    <property type="molecule type" value="mRNA"/>
</dbReference>
<dbReference type="EMBL" id="U66097">
    <property type="protein sequence ID" value="AAD38868.1"/>
    <property type="molecule type" value="mRNA"/>
</dbReference>
<dbReference type="EMBL" id="CR536551">
    <property type="protein sequence ID" value="CAG38788.1"/>
    <property type="molecule type" value="mRNA"/>
</dbReference>
<dbReference type="EMBL" id="CH471061">
    <property type="protein sequence ID" value="EAW80647.1"/>
    <property type="molecule type" value="Genomic_DNA"/>
</dbReference>
<dbReference type="EMBL" id="BC025415">
    <property type="protein sequence ID" value="AAH25415.1"/>
    <property type="molecule type" value="mRNA"/>
</dbReference>
<dbReference type="EMBL" id="L29478">
    <property type="protein sequence ID" value="AAB42186.1"/>
    <property type="molecule type" value="Genomic_DNA"/>
</dbReference>
<dbReference type="EMBL" id="Z30952">
    <property type="protein sequence ID" value="CAA83213.1"/>
    <property type="molecule type" value="Genomic_DNA"/>
</dbReference>
<dbReference type="EMBL" id="Z16418">
    <property type="protein sequence ID" value="CAA78908.1"/>
    <property type="molecule type" value="mRNA"/>
</dbReference>
<dbReference type="EMBL" id="U19259">
    <property type="protein sequence ID" value="AAB60633.1"/>
    <property type="molecule type" value="Genomic_DNA"/>
</dbReference>
<dbReference type="EMBL" id="U19256">
    <property type="protein sequence ID" value="AAB60633.1"/>
    <property type="status" value="JOINED"/>
    <property type="molecule type" value="Genomic_DNA"/>
</dbReference>
<dbReference type="EMBL" id="U19257">
    <property type="protein sequence ID" value="AAB60633.1"/>
    <property type="status" value="JOINED"/>
    <property type="molecule type" value="Genomic_DNA"/>
</dbReference>
<dbReference type="EMBL" id="U19258">
    <property type="protein sequence ID" value="AAB60633.1"/>
    <property type="status" value="JOINED"/>
    <property type="molecule type" value="Genomic_DNA"/>
</dbReference>
<dbReference type="CCDS" id="CCDS41954.1">
    <molecule id="P30793-4"/>
</dbReference>
<dbReference type="CCDS" id="CCDS45110.1">
    <molecule id="P30793-2"/>
</dbReference>
<dbReference type="CCDS" id="CCDS9720.1">
    <molecule id="P30793-1"/>
</dbReference>
<dbReference type="PIR" id="G01630">
    <property type="entry name" value="PC1117"/>
</dbReference>
<dbReference type="PIR" id="JC1225">
    <property type="entry name" value="JC1225"/>
</dbReference>
<dbReference type="RefSeq" id="NP_000152.1">
    <molecule id="P30793-1"/>
    <property type="nucleotide sequence ID" value="NM_000161.3"/>
</dbReference>
<dbReference type="RefSeq" id="NP_001019195.1">
    <molecule id="P30793-1"/>
    <property type="nucleotide sequence ID" value="NM_001024024.2"/>
</dbReference>
<dbReference type="RefSeq" id="NP_001019241.1">
    <molecule id="P30793-4"/>
    <property type="nucleotide sequence ID" value="NM_001024070.2"/>
</dbReference>
<dbReference type="RefSeq" id="NP_001019242.1">
    <molecule id="P30793-2"/>
    <property type="nucleotide sequence ID" value="NM_001024071.2"/>
</dbReference>
<dbReference type="PDB" id="1FB1">
    <property type="method" value="X-ray"/>
    <property type="resolution" value="3.10 A"/>
    <property type="chains" value="A/B/C/D/E=55-250"/>
</dbReference>
<dbReference type="PDB" id="6Z80">
    <property type="method" value="EM"/>
    <property type="resolution" value="3.00 A"/>
    <property type="chains" value="A/B/C/D/E/F/G/H/I/J=41-250"/>
</dbReference>
<dbReference type="PDB" id="6Z85">
    <property type="method" value="EM"/>
    <property type="resolution" value="2.90 A"/>
    <property type="chains" value="A/B/C/D/E/F/G/H/I/J=41-250"/>
</dbReference>
<dbReference type="PDB" id="6Z86">
    <property type="method" value="X-ray"/>
    <property type="resolution" value="2.21 A"/>
    <property type="chains" value="A/B/C/D/E/F/G/H/I/J/K/L/M/N/O/P/Q/R/S/T=41-250"/>
</dbReference>
<dbReference type="PDB" id="6Z87">
    <property type="method" value="X-ray"/>
    <property type="resolution" value="2.56 A"/>
    <property type="chains" value="A/B/C/D/E=41-250"/>
</dbReference>
<dbReference type="PDB" id="6Z88">
    <property type="method" value="X-ray"/>
    <property type="resolution" value="2.69 A"/>
    <property type="chains" value="A/B/C/D/E/F/G/H/I/J=41-250"/>
</dbReference>
<dbReference type="PDB" id="6Z89">
    <property type="method" value="X-ray"/>
    <property type="resolution" value="2.37 A"/>
    <property type="chains" value="A/B/C/D/E=41-250"/>
</dbReference>
<dbReference type="PDB" id="7ALA">
    <property type="method" value="X-ray"/>
    <property type="resolution" value="1.85 A"/>
    <property type="chains" value="A/B/C/D/E=42-250"/>
</dbReference>
<dbReference type="PDB" id="7ALB">
    <property type="method" value="X-ray"/>
    <property type="resolution" value="1.98 A"/>
    <property type="chains" value="A/B/C/D/E/F/G/H/I/J/K/L/M/N/O/P/Q/R/S/T=42-250"/>
</dbReference>
<dbReference type="PDB" id="7ALC">
    <property type="method" value="X-ray"/>
    <property type="resolution" value="1.73 A"/>
    <property type="chains" value="A/B/C/D/E=42-250"/>
</dbReference>
<dbReference type="PDB" id="7ALQ">
    <property type="method" value="X-ray"/>
    <property type="resolution" value="2.21 A"/>
    <property type="chains" value="A/B/C/D/E/F/G/H/I/J/K/L/M/N/O/P/Q/R/S/T=42-250"/>
</dbReference>
<dbReference type="PDBsum" id="1FB1"/>
<dbReference type="PDBsum" id="6Z80"/>
<dbReference type="PDBsum" id="6Z85"/>
<dbReference type="PDBsum" id="6Z86"/>
<dbReference type="PDBsum" id="6Z87"/>
<dbReference type="PDBsum" id="6Z88"/>
<dbReference type="PDBsum" id="6Z89"/>
<dbReference type="PDBsum" id="7ALA"/>
<dbReference type="PDBsum" id="7ALB"/>
<dbReference type="PDBsum" id="7ALC"/>
<dbReference type="PDBsum" id="7ALQ"/>
<dbReference type="EMDB" id="EMD-11113"/>
<dbReference type="EMDB" id="EMD-11114"/>
<dbReference type="SMR" id="P30793"/>
<dbReference type="BioGRID" id="108913">
    <property type="interactions" value="68"/>
</dbReference>
<dbReference type="FunCoup" id="P30793">
    <property type="interactions" value="849"/>
</dbReference>
<dbReference type="IntAct" id="P30793">
    <property type="interactions" value="45"/>
</dbReference>
<dbReference type="MINT" id="P30793"/>
<dbReference type="STRING" id="9606.ENSP00000477796"/>
<dbReference type="DrugBank" id="DB02377">
    <property type="generic name" value="Guanine"/>
</dbReference>
<dbReference type="DrugBank" id="DB04137">
    <property type="generic name" value="Guanosine-5'-Triphosphate"/>
</dbReference>
<dbReference type="DrugBank" id="DB02325">
    <property type="generic name" value="Isopropyl alcohol"/>
</dbReference>
<dbReference type="iPTMnet" id="P30793"/>
<dbReference type="PhosphoSitePlus" id="P30793"/>
<dbReference type="BioMuta" id="GCH1"/>
<dbReference type="DMDM" id="399536"/>
<dbReference type="jPOST" id="P30793"/>
<dbReference type="MassIVE" id="P30793"/>
<dbReference type="PaxDb" id="9606-ENSP00000419045"/>
<dbReference type="PeptideAtlas" id="P30793"/>
<dbReference type="ProteomicsDB" id="54735">
    <molecule id="P30793-1"/>
</dbReference>
<dbReference type="ProteomicsDB" id="54736">
    <molecule id="P30793-2"/>
</dbReference>
<dbReference type="ProteomicsDB" id="54737">
    <molecule id="P30793-3"/>
</dbReference>
<dbReference type="ProteomicsDB" id="54738">
    <molecule id="P30793-4"/>
</dbReference>
<dbReference type="Pumba" id="P30793"/>
<dbReference type="Antibodypedia" id="23963">
    <property type="antibodies" value="378 antibodies from 34 providers"/>
</dbReference>
<dbReference type="DNASU" id="2643"/>
<dbReference type="Ensembl" id="ENST00000395514.5">
    <molecule id="P30793-1"/>
    <property type="protein sequence ID" value="ENSP00000378890.1"/>
    <property type="gene ID" value="ENSG00000131979.20"/>
</dbReference>
<dbReference type="Ensembl" id="ENST00000491895.7">
    <molecule id="P30793-1"/>
    <property type="protein sequence ID" value="ENSP00000419045.2"/>
    <property type="gene ID" value="ENSG00000131979.20"/>
</dbReference>
<dbReference type="Ensembl" id="ENST00000536224.2">
    <molecule id="P30793-2"/>
    <property type="protein sequence ID" value="ENSP00000445246.2"/>
    <property type="gene ID" value="ENSG00000131979.20"/>
</dbReference>
<dbReference type="Ensembl" id="ENST00000543643.6">
    <molecule id="P30793-4"/>
    <property type="protein sequence ID" value="ENSP00000444011.2"/>
    <property type="gene ID" value="ENSG00000131979.20"/>
</dbReference>
<dbReference type="GeneID" id="2643"/>
<dbReference type="KEGG" id="hsa:2643"/>
<dbReference type="MANE-Select" id="ENST00000491895.7">
    <property type="protein sequence ID" value="ENSP00000419045.2"/>
    <property type="RefSeq nucleotide sequence ID" value="NM_000161.3"/>
    <property type="RefSeq protein sequence ID" value="NP_000152.1"/>
</dbReference>
<dbReference type="UCSC" id="uc001xbh.2">
    <molecule id="P30793-1"/>
    <property type="organism name" value="human"/>
</dbReference>
<dbReference type="AGR" id="HGNC:4193"/>
<dbReference type="CTD" id="2643"/>
<dbReference type="DisGeNET" id="2643"/>
<dbReference type="GeneCards" id="GCH1"/>
<dbReference type="GeneReviews" id="GCH1"/>
<dbReference type="HGNC" id="HGNC:4193">
    <property type="gene designation" value="GCH1"/>
</dbReference>
<dbReference type="HPA" id="ENSG00000131979">
    <property type="expression patterns" value="Tissue enhanced (bone marrow, liver)"/>
</dbReference>
<dbReference type="MalaCards" id="GCH1"/>
<dbReference type="MIM" id="128230">
    <property type="type" value="phenotype"/>
</dbReference>
<dbReference type="MIM" id="233910">
    <property type="type" value="phenotype"/>
</dbReference>
<dbReference type="MIM" id="600225">
    <property type="type" value="gene"/>
</dbReference>
<dbReference type="neXtProt" id="NX_P30793"/>
<dbReference type="OpenTargets" id="ENSG00000131979"/>
<dbReference type="Orphanet" id="98808">
    <property type="disease" value="Autosomal dominant dopa-responsive dystonia"/>
</dbReference>
<dbReference type="Orphanet" id="2102">
    <property type="disease" value="GTP cyclohydrolase I deficiency"/>
</dbReference>
<dbReference type="PharmGKB" id="PA28608"/>
<dbReference type="VEuPathDB" id="HostDB:ENSG00000131979"/>
<dbReference type="eggNOG" id="KOG2698">
    <property type="taxonomic scope" value="Eukaryota"/>
</dbReference>
<dbReference type="GeneTree" id="ENSGT00390000013481"/>
<dbReference type="HOGENOM" id="CLU_049768_1_3_1"/>
<dbReference type="InParanoid" id="P30793"/>
<dbReference type="OMA" id="CEHMCMS"/>
<dbReference type="OrthoDB" id="4966at2759"/>
<dbReference type="PAN-GO" id="P30793">
    <property type="GO annotations" value="5 GO annotations based on evolutionary models"/>
</dbReference>
<dbReference type="PhylomeDB" id="P30793"/>
<dbReference type="TreeFam" id="TF105616"/>
<dbReference type="BioCyc" id="MetaCyc:HS05586-MONOMER"/>
<dbReference type="BRENDA" id="3.5.4.16">
    <property type="organism ID" value="2681"/>
</dbReference>
<dbReference type="PathwayCommons" id="P30793"/>
<dbReference type="Reactome" id="R-HSA-1474151">
    <property type="pathway name" value="Tetrahydrobiopterin (BH4) synthesis, recycling, salvage and regulation"/>
</dbReference>
<dbReference type="SABIO-RK" id="P30793"/>
<dbReference type="SignaLink" id="P30793"/>
<dbReference type="SIGNOR" id="P30793"/>
<dbReference type="UniPathway" id="UPA00848">
    <property type="reaction ID" value="UER00151"/>
</dbReference>
<dbReference type="BioGRID-ORCS" id="2643">
    <property type="hits" value="15 hits in 1174 CRISPR screens"/>
</dbReference>
<dbReference type="ChiTaRS" id="GCH1">
    <property type="organism name" value="human"/>
</dbReference>
<dbReference type="EvolutionaryTrace" id="P30793"/>
<dbReference type="GeneWiki" id="GTP_cyclohydrolase_I"/>
<dbReference type="GenomeRNAi" id="2643"/>
<dbReference type="Pharos" id="P30793">
    <property type="development level" value="Tbio"/>
</dbReference>
<dbReference type="PRO" id="PR:P30793"/>
<dbReference type="Proteomes" id="UP000005640">
    <property type="component" value="Chromosome 14"/>
</dbReference>
<dbReference type="RNAct" id="P30793">
    <property type="molecule type" value="protein"/>
</dbReference>
<dbReference type="Bgee" id="ENSG00000131979">
    <property type="expression patterns" value="Expressed in secondary oocyte and 184 other cell types or tissues"/>
</dbReference>
<dbReference type="ExpressionAtlas" id="P30793">
    <property type="expression patterns" value="baseline and differential"/>
</dbReference>
<dbReference type="GO" id="GO:0005737">
    <property type="term" value="C:cytoplasm"/>
    <property type="evidence" value="ECO:0000314"/>
    <property type="project" value="UniProtKB"/>
</dbReference>
<dbReference type="GO" id="GO:0031410">
    <property type="term" value="C:cytoplasmic vesicle"/>
    <property type="evidence" value="ECO:0000314"/>
    <property type="project" value="UniProtKB"/>
</dbReference>
<dbReference type="GO" id="GO:0005829">
    <property type="term" value="C:cytosol"/>
    <property type="evidence" value="ECO:0000314"/>
    <property type="project" value="HPA"/>
</dbReference>
<dbReference type="GO" id="GO:0044306">
    <property type="term" value="C:neuron projection terminus"/>
    <property type="evidence" value="ECO:0000304"/>
    <property type="project" value="ParkinsonsUK-UCL"/>
</dbReference>
<dbReference type="GO" id="GO:0031965">
    <property type="term" value="C:nuclear membrane"/>
    <property type="evidence" value="ECO:0000314"/>
    <property type="project" value="HPA"/>
</dbReference>
<dbReference type="GO" id="GO:0005654">
    <property type="term" value="C:nucleoplasm"/>
    <property type="evidence" value="ECO:0000314"/>
    <property type="project" value="HPA"/>
</dbReference>
<dbReference type="GO" id="GO:0005634">
    <property type="term" value="C:nucleus"/>
    <property type="evidence" value="ECO:0000314"/>
    <property type="project" value="UniProtKB"/>
</dbReference>
<dbReference type="GO" id="GO:0032991">
    <property type="term" value="C:protein-containing complex"/>
    <property type="evidence" value="ECO:0000314"/>
    <property type="project" value="UniProtKB"/>
</dbReference>
<dbReference type="GO" id="GO:0005525">
    <property type="term" value="F:GTP binding"/>
    <property type="evidence" value="ECO:0000314"/>
    <property type="project" value="UniProtKB"/>
</dbReference>
<dbReference type="GO" id="GO:0003934">
    <property type="term" value="F:GTP cyclohydrolase I activity"/>
    <property type="evidence" value="ECO:0000314"/>
    <property type="project" value="UniProtKB"/>
</dbReference>
<dbReference type="GO" id="GO:0003924">
    <property type="term" value="F:GTPase activity"/>
    <property type="evidence" value="ECO:0000314"/>
    <property type="project" value="UniProtKB"/>
</dbReference>
<dbReference type="GO" id="GO:0042802">
    <property type="term" value="F:identical protein binding"/>
    <property type="evidence" value="ECO:0000353"/>
    <property type="project" value="UniProtKB"/>
</dbReference>
<dbReference type="GO" id="GO:0051019">
    <property type="term" value="F:mitogen-activated protein kinase binding"/>
    <property type="evidence" value="ECO:0000353"/>
    <property type="project" value="ParkinsonsUK-UCL"/>
</dbReference>
<dbReference type="GO" id="GO:0042803">
    <property type="term" value="F:protein homodimerization activity"/>
    <property type="evidence" value="ECO:0000353"/>
    <property type="project" value="UniProtKB"/>
</dbReference>
<dbReference type="GO" id="GO:0008270">
    <property type="term" value="F:zinc ion binding"/>
    <property type="evidence" value="ECO:0000314"/>
    <property type="project" value="UniProtKB"/>
</dbReference>
<dbReference type="GO" id="GO:0042416">
    <property type="term" value="P:dopamine biosynthetic process"/>
    <property type="evidence" value="ECO:0000314"/>
    <property type="project" value="UniProtKB"/>
</dbReference>
<dbReference type="GO" id="GO:0050884">
    <property type="term" value="P:neuromuscular process controlling posture"/>
    <property type="evidence" value="ECO:0000315"/>
    <property type="project" value="MGI"/>
</dbReference>
<dbReference type="GO" id="GO:0006809">
    <property type="term" value="P:nitric oxide biosynthetic process"/>
    <property type="evidence" value="ECO:0000303"/>
    <property type="project" value="UniProtKB"/>
</dbReference>
<dbReference type="GO" id="GO:0010460">
    <property type="term" value="P:positive regulation of heart rate"/>
    <property type="evidence" value="ECO:0007669"/>
    <property type="project" value="Ensembl"/>
</dbReference>
<dbReference type="GO" id="GO:0051000">
    <property type="term" value="P:positive regulation of nitric-oxide synthase activity"/>
    <property type="evidence" value="ECO:0000314"/>
    <property type="project" value="UniProtKB"/>
</dbReference>
<dbReference type="GO" id="GO:0042559">
    <property type="term" value="P:pteridine-containing compound biosynthetic process"/>
    <property type="evidence" value="ECO:0000314"/>
    <property type="project" value="UniProtKB"/>
</dbReference>
<dbReference type="GO" id="GO:0008217">
    <property type="term" value="P:regulation of blood pressure"/>
    <property type="evidence" value="ECO:0000315"/>
    <property type="project" value="UniProtKB"/>
</dbReference>
<dbReference type="GO" id="GO:0014916">
    <property type="term" value="P:regulation of lung blood pressure"/>
    <property type="evidence" value="ECO:0007669"/>
    <property type="project" value="Ensembl"/>
</dbReference>
<dbReference type="GO" id="GO:2000121">
    <property type="term" value="P:regulation of removal of superoxide radicals"/>
    <property type="evidence" value="ECO:0000315"/>
    <property type="project" value="BHF-UCL"/>
</dbReference>
<dbReference type="GO" id="GO:0032496">
    <property type="term" value="P:response to lipopolysaccharide"/>
    <property type="evidence" value="ECO:0000314"/>
    <property type="project" value="UniProtKB"/>
</dbReference>
<dbReference type="GO" id="GO:0048265">
    <property type="term" value="P:response to pain"/>
    <property type="evidence" value="ECO:0000250"/>
    <property type="project" value="UniProtKB"/>
</dbReference>
<dbReference type="GO" id="GO:0034612">
    <property type="term" value="P:response to tumor necrosis factor"/>
    <property type="evidence" value="ECO:0000314"/>
    <property type="project" value="UniProtKB"/>
</dbReference>
<dbReference type="GO" id="GO:0034341">
    <property type="term" value="P:response to type II interferon"/>
    <property type="evidence" value="ECO:0000314"/>
    <property type="project" value="UniProtKB"/>
</dbReference>
<dbReference type="GO" id="GO:0006729">
    <property type="term" value="P:tetrahydrobiopterin biosynthetic process"/>
    <property type="evidence" value="ECO:0000314"/>
    <property type="project" value="UniProtKB"/>
</dbReference>
<dbReference type="GO" id="GO:0046654">
    <property type="term" value="P:tetrahydrofolate biosynthetic process"/>
    <property type="evidence" value="ECO:0007669"/>
    <property type="project" value="InterPro"/>
</dbReference>
<dbReference type="CDD" id="cd00642">
    <property type="entry name" value="GTP_cyclohydro1"/>
    <property type="match status" value="1"/>
</dbReference>
<dbReference type="FunFam" id="1.10.286.10:FF:000003">
    <property type="entry name" value="GTP cyclohydrolase 1"/>
    <property type="match status" value="1"/>
</dbReference>
<dbReference type="FunFam" id="3.30.1130.10:FF:000012">
    <property type="entry name" value="GTP cyclohydrolase 1"/>
    <property type="match status" value="1"/>
</dbReference>
<dbReference type="Gene3D" id="1.10.286.10">
    <property type="match status" value="1"/>
</dbReference>
<dbReference type="Gene3D" id="3.30.1130.10">
    <property type="match status" value="1"/>
</dbReference>
<dbReference type="HAMAP" id="MF_00223">
    <property type="entry name" value="FolE"/>
    <property type="match status" value="1"/>
</dbReference>
<dbReference type="InterPro" id="IPR043133">
    <property type="entry name" value="GTP-CH-I_C/QueF"/>
</dbReference>
<dbReference type="InterPro" id="IPR043134">
    <property type="entry name" value="GTP-CH-I_N"/>
</dbReference>
<dbReference type="InterPro" id="IPR001474">
    <property type="entry name" value="GTP_CycHdrlase_I"/>
</dbReference>
<dbReference type="InterPro" id="IPR018234">
    <property type="entry name" value="GTP_CycHdrlase_I_CS"/>
</dbReference>
<dbReference type="InterPro" id="IPR020602">
    <property type="entry name" value="GTP_CycHdrlase_I_dom"/>
</dbReference>
<dbReference type="NCBIfam" id="TIGR00063">
    <property type="entry name" value="folE"/>
    <property type="match status" value="1"/>
</dbReference>
<dbReference type="NCBIfam" id="NF006825">
    <property type="entry name" value="PRK09347.1-2"/>
    <property type="match status" value="1"/>
</dbReference>
<dbReference type="NCBIfam" id="NF006826">
    <property type="entry name" value="PRK09347.1-3"/>
    <property type="match status" value="1"/>
</dbReference>
<dbReference type="PANTHER" id="PTHR11109:SF11">
    <property type="entry name" value="GTP CYCLOHYDROLASE 1"/>
    <property type="match status" value="1"/>
</dbReference>
<dbReference type="PANTHER" id="PTHR11109">
    <property type="entry name" value="GTP CYCLOHYDROLASE I"/>
    <property type="match status" value="1"/>
</dbReference>
<dbReference type="Pfam" id="PF01227">
    <property type="entry name" value="GTP_cyclohydroI"/>
    <property type="match status" value="1"/>
</dbReference>
<dbReference type="SUPFAM" id="SSF55620">
    <property type="entry name" value="Tetrahydrobiopterin biosynthesis enzymes-like"/>
    <property type="match status" value="1"/>
</dbReference>
<dbReference type="PROSITE" id="PS00859">
    <property type="entry name" value="GTP_CYCLOHYDROL_1_1"/>
    <property type="match status" value="1"/>
</dbReference>
<dbReference type="PROSITE" id="PS00860">
    <property type="entry name" value="GTP_CYCLOHYDROL_1_2"/>
    <property type="match status" value="1"/>
</dbReference>
<name>GCH1_HUMAN</name>